<keyword id="KW-0963">Cytoplasm</keyword>
<keyword id="KW-0227">DNA damage</keyword>
<keyword id="KW-0234">DNA repair</keyword>
<keyword id="KW-0235">DNA replication</keyword>
<keyword id="KW-0238">DNA-binding</keyword>
<keyword id="KW-0239">DNA-directed DNA polymerase</keyword>
<keyword id="KW-0460">Magnesium</keyword>
<keyword id="KW-0479">Metal-binding</keyword>
<keyword id="KW-0515">Mutator protein</keyword>
<keyword id="KW-0548">Nucleotidyltransferase</keyword>
<keyword id="KW-0808">Transferase</keyword>
<dbReference type="EC" id="2.7.7.7" evidence="1"/>
<dbReference type="EMBL" id="AE015929">
    <property type="protein sequence ID" value="AAO05179.1"/>
    <property type="molecule type" value="Genomic_DNA"/>
</dbReference>
<dbReference type="RefSeq" id="NP_765135.1">
    <property type="nucleotide sequence ID" value="NC_004461.1"/>
</dbReference>
<dbReference type="RefSeq" id="WP_001830390.1">
    <property type="nucleotide sequence ID" value="NZ_WBME01000010.1"/>
</dbReference>
<dbReference type="SMR" id="Q8CNP3"/>
<dbReference type="GeneID" id="50018320"/>
<dbReference type="KEGG" id="sep:SE_1580"/>
<dbReference type="PATRIC" id="fig|176280.10.peg.1544"/>
<dbReference type="eggNOG" id="COG0389">
    <property type="taxonomic scope" value="Bacteria"/>
</dbReference>
<dbReference type="HOGENOM" id="CLU_012348_1_2_9"/>
<dbReference type="OrthoDB" id="9808813at2"/>
<dbReference type="Proteomes" id="UP000001411">
    <property type="component" value="Chromosome"/>
</dbReference>
<dbReference type="GO" id="GO:0005829">
    <property type="term" value="C:cytosol"/>
    <property type="evidence" value="ECO:0007669"/>
    <property type="project" value="TreeGrafter"/>
</dbReference>
<dbReference type="GO" id="GO:0003684">
    <property type="term" value="F:damaged DNA binding"/>
    <property type="evidence" value="ECO:0007669"/>
    <property type="project" value="InterPro"/>
</dbReference>
<dbReference type="GO" id="GO:0003887">
    <property type="term" value="F:DNA-directed DNA polymerase activity"/>
    <property type="evidence" value="ECO:0007669"/>
    <property type="project" value="UniProtKB-UniRule"/>
</dbReference>
<dbReference type="GO" id="GO:0000287">
    <property type="term" value="F:magnesium ion binding"/>
    <property type="evidence" value="ECO:0007669"/>
    <property type="project" value="UniProtKB-UniRule"/>
</dbReference>
<dbReference type="GO" id="GO:0006261">
    <property type="term" value="P:DNA-templated DNA replication"/>
    <property type="evidence" value="ECO:0007669"/>
    <property type="project" value="UniProtKB-UniRule"/>
</dbReference>
<dbReference type="GO" id="GO:0042276">
    <property type="term" value="P:error-prone translesion synthesis"/>
    <property type="evidence" value="ECO:0007669"/>
    <property type="project" value="TreeGrafter"/>
</dbReference>
<dbReference type="GO" id="GO:0009432">
    <property type="term" value="P:SOS response"/>
    <property type="evidence" value="ECO:0007669"/>
    <property type="project" value="TreeGrafter"/>
</dbReference>
<dbReference type="CDD" id="cd03586">
    <property type="entry name" value="PolY_Pol_IV_kappa"/>
    <property type="match status" value="1"/>
</dbReference>
<dbReference type="FunFam" id="3.30.1490.100:FF:000004">
    <property type="entry name" value="DNA polymerase IV"/>
    <property type="match status" value="1"/>
</dbReference>
<dbReference type="FunFam" id="3.40.1170.60:FF:000001">
    <property type="entry name" value="DNA polymerase IV"/>
    <property type="match status" value="1"/>
</dbReference>
<dbReference type="Gene3D" id="3.30.70.270">
    <property type="match status" value="1"/>
</dbReference>
<dbReference type="Gene3D" id="3.40.1170.60">
    <property type="match status" value="1"/>
</dbReference>
<dbReference type="Gene3D" id="1.10.150.20">
    <property type="entry name" value="5' to 3' exonuclease, C-terminal subdomain"/>
    <property type="match status" value="1"/>
</dbReference>
<dbReference type="Gene3D" id="3.30.1490.100">
    <property type="entry name" value="DNA polymerase, Y-family, little finger domain"/>
    <property type="match status" value="1"/>
</dbReference>
<dbReference type="HAMAP" id="MF_01113">
    <property type="entry name" value="DNApol_IV"/>
    <property type="match status" value="1"/>
</dbReference>
<dbReference type="InterPro" id="IPR043502">
    <property type="entry name" value="DNA/RNA_pol_sf"/>
</dbReference>
<dbReference type="InterPro" id="IPR036775">
    <property type="entry name" value="DNA_pol_Y-fam_lit_finger_sf"/>
</dbReference>
<dbReference type="InterPro" id="IPR017961">
    <property type="entry name" value="DNA_pol_Y-fam_little_finger"/>
</dbReference>
<dbReference type="InterPro" id="IPR050116">
    <property type="entry name" value="DNA_polymerase-Y"/>
</dbReference>
<dbReference type="InterPro" id="IPR022880">
    <property type="entry name" value="DNApol_IV"/>
</dbReference>
<dbReference type="InterPro" id="IPR053848">
    <property type="entry name" value="IMS_HHH_1"/>
</dbReference>
<dbReference type="InterPro" id="IPR043128">
    <property type="entry name" value="Rev_trsase/Diguanyl_cyclase"/>
</dbReference>
<dbReference type="InterPro" id="IPR001126">
    <property type="entry name" value="UmuC"/>
</dbReference>
<dbReference type="NCBIfam" id="NF002677">
    <property type="entry name" value="PRK02406.1"/>
    <property type="match status" value="1"/>
</dbReference>
<dbReference type="NCBIfam" id="NF010731">
    <property type="entry name" value="PRK14133.1"/>
    <property type="match status" value="1"/>
</dbReference>
<dbReference type="PANTHER" id="PTHR11076:SF33">
    <property type="entry name" value="DNA POLYMERASE KAPPA"/>
    <property type="match status" value="1"/>
</dbReference>
<dbReference type="PANTHER" id="PTHR11076">
    <property type="entry name" value="DNA REPAIR POLYMERASE UMUC / TRANSFERASE FAMILY MEMBER"/>
    <property type="match status" value="1"/>
</dbReference>
<dbReference type="Pfam" id="PF00817">
    <property type="entry name" value="IMS"/>
    <property type="match status" value="1"/>
</dbReference>
<dbReference type="Pfam" id="PF11799">
    <property type="entry name" value="IMS_C"/>
    <property type="match status" value="1"/>
</dbReference>
<dbReference type="Pfam" id="PF21999">
    <property type="entry name" value="IMS_HHH_1"/>
    <property type="match status" value="1"/>
</dbReference>
<dbReference type="SUPFAM" id="SSF56672">
    <property type="entry name" value="DNA/RNA polymerases"/>
    <property type="match status" value="1"/>
</dbReference>
<dbReference type="SUPFAM" id="SSF100879">
    <property type="entry name" value="Lesion bypass DNA polymerase (Y-family), little finger domain"/>
    <property type="match status" value="1"/>
</dbReference>
<dbReference type="PROSITE" id="PS50173">
    <property type="entry name" value="UMUC"/>
    <property type="match status" value="1"/>
</dbReference>
<reference key="1">
    <citation type="journal article" date="2003" name="Mol. Microbiol.">
        <title>Genome-based analysis of virulence genes in a non-biofilm-forming Staphylococcus epidermidis strain (ATCC 12228).</title>
        <authorList>
            <person name="Zhang Y.-Q."/>
            <person name="Ren S.-X."/>
            <person name="Li H.-L."/>
            <person name="Wang Y.-X."/>
            <person name="Fu G."/>
            <person name="Yang J."/>
            <person name="Qin Z.-Q."/>
            <person name="Miao Y.-G."/>
            <person name="Wang W.-Y."/>
            <person name="Chen R.-S."/>
            <person name="Shen Y."/>
            <person name="Chen Z."/>
            <person name="Yuan Z.-H."/>
            <person name="Zhao G.-P."/>
            <person name="Qu D."/>
            <person name="Danchin A."/>
            <person name="Wen Y.-M."/>
        </authorList>
    </citation>
    <scope>NUCLEOTIDE SEQUENCE [LARGE SCALE GENOMIC DNA]</scope>
    <source>
        <strain>ATCC 12228 / FDA PCI 1200</strain>
    </source>
</reference>
<accession>Q8CNP3</accession>
<protein>
    <recommendedName>
        <fullName evidence="1">DNA polymerase IV</fullName>
        <shortName evidence="1">Pol IV</shortName>
        <ecNumber evidence="1">2.7.7.7</ecNumber>
    </recommendedName>
</protein>
<comment type="function">
    <text evidence="1">Poorly processive, error-prone DNA polymerase involved in untargeted mutagenesis. Copies undamaged DNA at stalled replication forks, which arise in vivo from mismatched or misaligned primer ends. These misaligned primers can be extended by PolIV. Exhibits no 3'-5' exonuclease (proofreading) activity. May be involved in translesional synthesis, in conjunction with the beta clamp from PolIII.</text>
</comment>
<comment type="catalytic activity">
    <reaction evidence="1">
        <text>DNA(n) + a 2'-deoxyribonucleoside 5'-triphosphate = DNA(n+1) + diphosphate</text>
        <dbReference type="Rhea" id="RHEA:22508"/>
        <dbReference type="Rhea" id="RHEA-COMP:17339"/>
        <dbReference type="Rhea" id="RHEA-COMP:17340"/>
        <dbReference type="ChEBI" id="CHEBI:33019"/>
        <dbReference type="ChEBI" id="CHEBI:61560"/>
        <dbReference type="ChEBI" id="CHEBI:173112"/>
        <dbReference type="EC" id="2.7.7.7"/>
    </reaction>
</comment>
<comment type="cofactor">
    <cofactor evidence="1">
        <name>Mg(2+)</name>
        <dbReference type="ChEBI" id="CHEBI:18420"/>
    </cofactor>
    <text evidence="1">Binds 2 magnesium ions per subunit.</text>
</comment>
<comment type="subunit">
    <text evidence="1">Monomer.</text>
</comment>
<comment type="subcellular location">
    <subcellularLocation>
        <location evidence="1">Cytoplasm</location>
    </subcellularLocation>
</comment>
<comment type="similarity">
    <text evidence="1">Belongs to the DNA polymerase type-Y family.</text>
</comment>
<sequence>MTERRIIHIDMDYFFAQVEMRDNPKLKGKPVIVGGKASHRGVVSTASYEARAYGVHSAMPMTQAHKLCPNGYYVTSRFDTYREVSGQIMKIFRSYTELVEPMSLDEAYLDITHLVRPDLPASTIANYIRRDIYEVTRLTASAGVSYNKFLAKLASGMNKPNGLTVIDYNNVHEILMQLDIGDFPGVGKASKKKMHQHHIYTGQDLYNKDEFELIRLFGKRGRGLYNKARGIDHNEVKASRVRKSVGTERTFSTDVNDDDVILRKIRELSGKTAERLNKIQKSGKTVTVKIKTYQYETISKQKSLRDPIRTETDIYNIAYTLYNDLKDPEIPIRLIGVTVGSLEQSDFKNLTIYDFI</sequence>
<feature type="chain" id="PRO_0000173949" description="DNA polymerase IV">
    <location>
        <begin position="1"/>
        <end position="356"/>
    </location>
</feature>
<feature type="domain" description="UmuC" evidence="1">
    <location>
        <begin position="6"/>
        <end position="187"/>
    </location>
</feature>
<feature type="active site" evidence="1">
    <location>
        <position position="106"/>
    </location>
</feature>
<feature type="binding site" evidence="1">
    <location>
        <position position="10"/>
    </location>
    <ligand>
        <name>Mg(2+)</name>
        <dbReference type="ChEBI" id="CHEBI:18420"/>
    </ligand>
</feature>
<feature type="binding site" evidence="1">
    <location>
        <position position="105"/>
    </location>
    <ligand>
        <name>Mg(2+)</name>
        <dbReference type="ChEBI" id="CHEBI:18420"/>
    </ligand>
</feature>
<feature type="site" description="Substrate discrimination" evidence="1">
    <location>
        <position position="15"/>
    </location>
</feature>
<organism>
    <name type="scientific">Staphylococcus epidermidis (strain ATCC 12228 / FDA PCI 1200)</name>
    <dbReference type="NCBI Taxonomy" id="176280"/>
    <lineage>
        <taxon>Bacteria</taxon>
        <taxon>Bacillati</taxon>
        <taxon>Bacillota</taxon>
        <taxon>Bacilli</taxon>
        <taxon>Bacillales</taxon>
        <taxon>Staphylococcaceae</taxon>
        <taxon>Staphylococcus</taxon>
    </lineage>
</organism>
<proteinExistence type="inferred from homology"/>
<evidence type="ECO:0000255" key="1">
    <source>
        <dbReference type="HAMAP-Rule" id="MF_01113"/>
    </source>
</evidence>
<gene>
    <name evidence="1" type="primary">dinB</name>
    <name type="ordered locus">SE_1580</name>
</gene>
<name>DPO4_STAES</name>